<accession>C6DYJ2</accession>
<dbReference type="EMBL" id="CP001661">
    <property type="protein sequence ID" value="ACT18276.1"/>
    <property type="molecule type" value="Genomic_DNA"/>
</dbReference>
<dbReference type="SMR" id="C6DYJ2"/>
<dbReference type="STRING" id="443144.GM21_2227"/>
<dbReference type="KEGG" id="gem:GM21_2227"/>
<dbReference type="eggNOG" id="COG0292">
    <property type="taxonomic scope" value="Bacteria"/>
</dbReference>
<dbReference type="HOGENOM" id="CLU_123265_0_1_7"/>
<dbReference type="OrthoDB" id="9808966at2"/>
<dbReference type="GO" id="GO:1990904">
    <property type="term" value="C:ribonucleoprotein complex"/>
    <property type="evidence" value="ECO:0007669"/>
    <property type="project" value="UniProtKB-KW"/>
</dbReference>
<dbReference type="GO" id="GO:0005840">
    <property type="term" value="C:ribosome"/>
    <property type="evidence" value="ECO:0007669"/>
    <property type="project" value="UniProtKB-KW"/>
</dbReference>
<dbReference type="GO" id="GO:0019843">
    <property type="term" value="F:rRNA binding"/>
    <property type="evidence" value="ECO:0007669"/>
    <property type="project" value="UniProtKB-UniRule"/>
</dbReference>
<dbReference type="GO" id="GO:0003735">
    <property type="term" value="F:structural constituent of ribosome"/>
    <property type="evidence" value="ECO:0007669"/>
    <property type="project" value="InterPro"/>
</dbReference>
<dbReference type="GO" id="GO:0000027">
    <property type="term" value="P:ribosomal large subunit assembly"/>
    <property type="evidence" value="ECO:0007669"/>
    <property type="project" value="UniProtKB-UniRule"/>
</dbReference>
<dbReference type="GO" id="GO:0006412">
    <property type="term" value="P:translation"/>
    <property type="evidence" value="ECO:0007669"/>
    <property type="project" value="InterPro"/>
</dbReference>
<dbReference type="CDD" id="cd07026">
    <property type="entry name" value="Ribosomal_L20"/>
    <property type="match status" value="1"/>
</dbReference>
<dbReference type="FunFam" id="1.10.1900.20:FF:000001">
    <property type="entry name" value="50S ribosomal protein L20"/>
    <property type="match status" value="1"/>
</dbReference>
<dbReference type="Gene3D" id="6.10.160.10">
    <property type="match status" value="1"/>
</dbReference>
<dbReference type="Gene3D" id="1.10.1900.20">
    <property type="entry name" value="Ribosomal protein L20"/>
    <property type="match status" value="1"/>
</dbReference>
<dbReference type="HAMAP" id="MF_00382">
    <property type="entry name" value="Ribosomal_bL20"/>
    <property type="match status" value="1"/>
</dbReference>
<dbReference type="InterPro" id="IPR005813">
    <property type="entry name" value="Ribosomal_bL20"/>
</dbReference>
<dbReference type="InterPro" id="IPR049946">
    <property type="entry name" value="RIBOSOMAL_L20_CS"/>
</dbReference>
<dbReference type="InterPro" id="IPR035566">
    <property type="entry name" value="Ribosomal_protein_bL20_C"/>
</dbReference>
<dbReference type="NCBIfam" id="TIGR01032">
    <property type="entry name" value="rplT_bact"/>
    <property type="match status" value="1"/>
</dbReference>
<dbReference type="PANTHER" id="PTHR10986">
    <property type="entry name" value="39S RIBOSOMAL PROTEIN L20"/>
    <property type="match status" value="1"/>
</dbReference>
<dbReference type="Pfam" id="PF00453">
    <property type="entry name" value="Ribosomal_L20"/>
    <property type="match status" value="1"/>
</dbReference>
<dbReference type="PRINTS" id="PR00062">
    <property type="entry name" value="RIBOSOMALL20"/>
</dbReference>
<dbReference type="SUPFAM" id="SSF74731">
    <property type="entry name" value="Ribosomal protein L20"/>
    <property type="match status" value="1"/>
</dbReference>
<dbReference type="PROSITE" id="PS00937">
    <property type="entry name" value="RIBOSOMAL_L20"/>
    <property type="match status" value="1"/>
</dbReference>
<reference key="1">
    <citation type="submission" date="2009-07" db="EMBL/GenBank/DDBJ databases">
        <title>Complete sequence of Geobacter sp. M21.</title>
        <authorList>
            <consortium name="US DOE Joint Genome Institute"/>
            <person name="Lucas S."/>
            <person name="Copeland A."/>
            <person name="Lapidus A."/>
            <person name="Glavina del Rio T."/>
            <person name="Dalin E."/>
            <person name="Tice H."/>
            <person name="Bruce D."/>
            <person name="Goodwin L."/>
            <person name="Pitluck S."/>
            <person name="Saunders E."/>
            <person name="Brettin T."/>
            <person name="Detter J.C."/>
            <person name="Han C."/>
            <person name="Larimer F."/>
            <person name="Land M."/>
            <person name="Hauser L."/>
            <person name="Kyrpides N."/>
            <person name="Ovchinnikova G."/>
            <person name="Lovley D."/>
        </authorList>
    </citation>
    <scope>NUCLEOTIDE SEQUENCE [LARGE SCALE GENOMIC DNA]</scope>
    <source>
        <strain>M21</strain>
    </source>
</reference>
<comment type="function">
    <text evidence="1">Binds directly to 23S ribosomal RNA and is necessary for the in vitro assembly process of the 50S ribosomal subunit. It is not involved in the protein synthesizing functions of that subunit.</text>
</comment>
<comment type="similarity">
    <text evidence="1">Belongs to the bacterial ribosomal protein bL20 family.</text>
</comment>
<evidence type="ECO:0000255" key="1">
    <source>
        <dbReference type="HAMAP-Rule" id="MF_00382"/>
    </source>
</evidence>
<evidence type="ECO:0000305" key="2"/>
<feature type="chain" id="PRO_1000205714" description="Large ribosomal subunit protein bL20">
    <location>
        <begin position="1"/>
        <end position="117"/>
    </location>
</feature>
<gene>
    <name evidence="1" type="primary">rplT</name>
    <name type="ordered locus">GM21_2227</name>
</gene>
<proteinExistence type="inferred from homology"/>
<name>RL20_GEOSM</name>
<protein>
    <recommendedName>
        <fullName evidence="1">Large ribosomal subunit protein bL20</fullName>
    </recommendedName>
    <alternativeName>
        <fullName evidence="2">50S ribosomal protein L20</fullName>
    </alternativeName>
</protein>
<sequence length="117" mass="13231">MPRVKRGFKARQRRNKVLKLAKGYRGARSKLFRSATEAVDRALNYAFRDRRVKKRDFRALWITRINAAARINGLSYSKLIHGLKLANVEIDRKVMADLAVSDPNGFAAIAAAAKAKF</sequence>
<organism>
    <name type="scientific">Geobacter sp. (strain M21)</name>
    <dbReference type="NCBI Taxonomy" id="443144"/>
    <lineage>
        <taxon>Bacteria</taxon>
        <taxon>Pseudomonadati</taxon>
        <taxon>Thermodesulfobacteriota</taxon>
        <taxon>Desulfuromonadia</taxon>
        <taxon>Geobacterales</taxon>
        <taxon>Geobacteraceae</taxon>
        <taxon>Geobacter</taxon>
    </lineage>
</organism>
<keyword id="KW-0687">Ribonucleoprotein</keyword>
<keyword id="KW-0689">Ribosomal protein</keyword>
<keyword id="KW-0694">RNA-binding</keyword>
<keyword id="KW-0699">rRNA-binding</keyword>